<sequence>MAKAPIRARKRVRKQVSDGVAHIHASFNNTIVTITDRQGNALGWATAGGSGFRGSRKSTPFAAQVAAERCADAVKEYGIKNLEVMVKGPGPGRESTIRALNAAGFRITNITDVTPIPHNGCRPPKKRRV</sequence>
<evidence type="ECO:0000255" key="1">
    <source>
        <dbReference type="HAMAP-Rule" id="MF_01310"/>
    </source>
</evidence>
<evidence type="ECO:0000305" key="2"/>
<feature type="chain" id="PRO_1000067500" description="Small ribosomal subunit protein uS11">
    <location>
        <begin position="1"/>
        <end position="129"/>
    </location>
</feature>
<proteinExistence type="inferred from homology"/>
<keyword id="KW-1185">Reference proteome</keyword>
<keyword id="KW-0687">Ribonucleoprotein</keyword>
<keyword id="KW-0689">Ribosomal protein</keyword>
<keyword id="KW-0694">RNA-binding</keyword>
<keyword id="KW-0699">rRNA-binding</keyword>
<accession>A7ZSI6</accession>
<comment type="function">
    <text evidence="1">Located on the platform of the 30S subunit, it bridges several disparate RNA helices of the 16S rRNA. Forms part of the Shine-Dalgarno cleft in the 70S ribosome.</text>
</comment>
<comment type="subunit">
    <text evidence="1">Part of the 30S ribosomal subunit. Interacts with proteins S7 and S18. Binds to IF-3.</text>
</comment>
<comment type="similarity">
    <text evidence="1">Belongs to the universal ribosomal protein uS11 family.</text>
</comment>
<protein>
    <recommendedName>
        <fullName evidence="1">Small ribosomal subunit protein uS11</fullName>
    </recommendedName>
    <alternativeName>
        <fullName evidence="2">30S ribosomal protein S11</fullName>
    </alternativeName>
</protein>
<reference key="1">
    <citation type="journal article" date="2008" name="J. Bacteriol.">
        <title>The pangenome structure of Escherichia coli: comparative genomic analysis of E. coli commensal and pathogenic isolates.</title>
        <authorList>
            <person name="Rasko D.A."/>
            <person name="Rosovitz M.J."/>
            <person name="Myers G.S.A."/>
            <person name="Mongodin E.F."/>
            <person name="Fricke W.F."/>
            <person name="Gajer P."/>
            <person name="Crabtree J."/>
            <person name="Sebaihia M."/>
            <person name="Thomson N.R."/>
            <person name="Chaudhuri R."/>
            <person name="Henderson I.R."/>
            <person name="Sperandio V."/>
            <person name="Ravel J."/>
        </authorList>
    </citation>
    <scope>NUCLEOTIDE SEQUENCE [LARGE SCALE GENOMIC DNA]</scope>
    <source>
        <strain>E24377A / ETEC</strain>
    </source>
</reference>
<dbReference type="EMBL" id="CP000800">
    <property type="protein sequence ID" value="ABV17864.1"/>
    <property type="molecule type" value="Genomic_DNA"/>
</dbReference>
<dbReference type="RefSeq" id="WP_001029684.1">
    <property type="nucleotide sequence ID" value="NC_009801.1"/>
</dbReference>
<dbReference type="SMR" id="A7ZSI6"/>
<dbReference type="GeneID" id="93778690"/>
<dbReference type="KEGG" id="ecw:EcE24377A_3780"/>
<dbReference type="HOGENOM" id="CLU_072439_5_0_6"/>
<dbReference type="Proteomes" id="UP000001122">
    <property type="component" value="Chromosome"/>
</dbReference>
<dbReference type="GO" id="GO:1990904">
    <property type="term" value="C:ribonucleoprotein complex"/>
    <property type="evidence" value="ECO:0007669"/>
    <property type="project" value="UniProtKB-KW"/>
</dbReference>
<dbReference type="GO" id="GO:0005840">
    <property type="term" value="C:ribosome"/>
    <property type="evidence" value="ECO:0007669"/>
    <property type="project" value="UniProtKB-KW"/>
</dbReference>
<dbReference type="GO" id="GO:0019843">
    <property type="term" value="F:rRNA binding"/>
    <property type="evidence" value="ECO:0007669"/>
    <property type="project" value="UniProtKB-UniRule"/>
</dbReference>
<dbReference type="GO" id="GO:0003735">
    <property type="term" value="F:structural constituent of ribosome"/>
    <property type="evidence" value="ECO:0007669"/>
    <property type="project" value="InterPro"/>
</dbReference>
<dbReference type="GO" id="GO:0006412">
    <property type="term" value="P:translation"/>
    <property type="evidence" value="ECO:0007669"/>
    <property type="project" value="UniProtKB-UniRule"/>
</dbReference>
<dbReference type="FunFam" id="3.30.420.80:FF:000001">
    <property type="entry name" value="30S ribosomal protein S11"/>
    <property type="match status" value="1"/>
</dbReference>
<dbReference type="Gene3D" id="3.30.420.80">
    <property type="entry name" value="Ribosomal protein S11"/>
    <property type="match status" value="1"/>
</dbReference>
<dbReference type="HAMAP" id="MF_01310">
    <property type="entry name" value="Ribosomal_uS11"/>
    <property type="match status" value="1"/>
</dbReference>
<dbReference type="InterPro" id="IPR001971">
    <property type="entry name" value="Ribosomal_uS11"/>
</dbReference>
<dbReference type="InterPro" id="IPR019981">
    <property type="entry name" value="Ribosomal_uS11_bac-type"/>
</dbReference>
<dbReference type="InterPro" id="IPR018102">
    <property type="entry name" value="Ribosomal_uS11_CS"/>
</dbReference>
<dbReference type="InterPro" id="IPR036967">
    <property type="entry name" value="Ribosomal_uS11_sf"/>
</dbReference>
<dbReference type="NCBIfam" id="NF003698">
    <property type="entry name" value="PRK05309.1"/>
    <property type="match status" value="1"/>
</dbReference>
<dbReference type="NCBIfam" id="TIGR03632">
    <property type="entry name" value="uS11_bact"/>
    <property type="match status" value="1"/>
</dbReference>
<dbReference type="PANTHER" id="PTHR11759">
    <property type="entry name" value="40S RIBOSOMAL PROTEIN S14/30S RIBOSOMAL PROTEIN S11"/>
    <property type="match status" value="1"/>
</dbReference>
<dbReference type="Pfam" id="PF00411">
    <property type="entry name" value="Ribosomal_S11"/>
    <property type="match status" value="1"/>
</dbReference>
<dbReference type="PIRSF" id="PIRSF002131">
    <property type="entry name" value="Ribosomal_S11"/>
    <property type="match status" value="1"/>
</dbReference>
<dbReference type="SUPFAM" id="SSF53137">
    <property type="entry name" value="Translational machinery components"/>
    <property type="match status" value="1"/>
</dbReference>
<dbReference type="PROSITE" id="PS00054">
    <property type="entry name" value="RIBOSOMAL_S11"/>
    <property type="match status" value="1"/>
</dbReference>
<name>RS11_ECO24</name>
<gene>
    <name evidence="1" type="primary">rpsK</name>
    <name type="ordered locus">EcE24377A_3780</name>
</gene>
<organism>
    <name type="scientific">Escherichia coli O139:H28 (strain E24377A / ETEC)</name>
    <dbReference type="NCBI Taxonomy" id="331111"/>
    <lineage>
        <taxon>Bacteria</taxon>
        <taxon>Pseudomonadati</taxon>
        <taxon>Pseudomonadota</taxon>
        <taxon>Gammaproteobacteria</taxon>
        <taxon>Enterobacterales</taxon>
        <taxon>Enterobacteriaceae</taxon>
        <taxon>Escherichia</taxon>
    </lineage>
</organism>